<sequence length="336" mass="37530">MLSYAPENAYQRASTMENKKVFPKEKSGLHPRNRHRSRYDFDALSVSCPELIPFLAPTAYGDISVDFADPLAVKMLNKALLKHFYGIEYWDIPADSLCPPIPGRADYVHHLADLLASCNGEVIPKGKNIALLDIGVGANCIYPIIGQREYGWRFTGTDIDSHALSAAKMVVSMNPTLKNTLRLKQQKDPHAIFEGVWAVNERYDATLCNPPFHGSAEEAAATTRRKLHKLGKNEVAAKPVQNFGGKNSELWCEGGEEGFVSRMVAESVAKAQNCFWFTSLISKKTTLPAIYHALRYVKAVEVRTIEMAQGQKVSRFVAWTFLTPEQQAAWVAERWA</sequence>
<dbReference type="EC" id="2.1.1.181" evidence="1"/>
<dbReference type="EMBL" id="CP001048">
    <property type="protein sequence ID" value="ACC89607.1"/>
    <property type="status" value="ALT_INIT"/>
    <property type="molecule type" value="Genomic_DNA"/>
</dbReference>
<dbReference type="SMR" id="B2K7Y6"/>
<dbReference type="KEGG" id="ypb:YPTS_2647"/>
<dbReference type="GO" id="GO:0005737">
    <property type="term" value="C:cytoplasm"/>
    <property type="evidence" value="ECO:0007669"/>
    <property type="project" value="UniProtKB-SubCell"/>
</dbReference>
<dbReference type="GO" id="GO:0052907">
    <property type="term" value="F:23S rRNA (adenine(1618)-N(6))-methyltransferase activity"/>
    <property type="evidence" value="ECO:0007669"/>
    <property type="project" value="UniProtKB-EC"/>
</dbReference>
<dbReference type="GO" id="GO:0070475">
    <property type="term" value="P:rRNA base methylation"/>
    <property type="evidence" value="ECO:0007669"/>
    <property type="project" value="TreeGrafter"/>
</dbReference>
<dbReference type="CDD" id="cd02440">
    <property type="entry name" value="AdoMet_MTases"/>
    <property type="match status" value="1"/>
</dbReference>
<dbReference type="FunFam" id="3.40.50.150:FF:000045">
    <property type="entry name" value="Ribosomal RNA large subunit methyltransferase F"/>
    <property type="match status" value="1"/>
</dbReference>
<dbReference type="Gene3D" id="3.40.50.150">
    <property type="entry name" value="Vaccinia Virus protein VP39"/>
    <property type="match status" value="1"/>
</dbReference>
<dbReference type="HAMAP" id="MF_01848">
    <property type="entry name" value="23SrRNA_methyltr_F"/>
    <property type="match status" value="1"/>
</dbReference>
<dbReference type="InterPro" id="IPR010286">
    <property type="entry name" value="METTL16/RlmF"/>
</dbReference>
<dbReference type="InterPro" id="IPR016909">
    <property type="entry name" value="rRNA_lsu_MeTfrase_F"/>
</dbReference>
<dbReference type="InterPro" id="IPR029063">
    <property type="entry name" value="SAM-dependent_MTases_sf"/>
</dbReference>
<dbReference type="NCBIfam" id="NF008725">
    <property type="entry name" value="PRK11727.1"/>
    <property type="match status" value="1"/>
</dbReference>
<dbReference type="PANTHER" id="PTHR13393:SF0">
    <property type="entry name" value="RNA N6-ADENOSINE-METHYLTRANSFERASE METTL16"/>
    <property type="match status" value="1"/>
</dbReference>
<dbReference type="PANTHER" id="PTHR13393">
    <property type="entry name" value="SAM-DEPENDENT METHYLTRANSFERASE"/>
    <property type="match status" value="1"/>
</dbReference>
<dbReference type="Pfam" id="PF05971">
    <property type="entry name" value="Methyltransf_10"/>
    <property type="match status" value="1"/>
</dbReference>
<dbReference type="PIRSF" id="PIRSF029038">
    <property type="entry name" value="Mtase_YbiN_prd"/>
    <property type="match status" value="1"/>
</dbReference>
<dbReference type="SUPFAM" id="SSF53335">
    <property type="entry name" value="S-adenosyl-L-methionine-dependent methyltransferases"/>
    <property type="match status" value="1"/>
</dbReference>
<reference key="1">
    <citation type="submission" date="2008-04" db="EMBL/GenBank/DDBJ databases">
        <title>Complete sequence of Yersinia pseudotuberculosis PB1/+.</title>
        <authorList>
            <person name="Copeland A."/>
            <person name="Lucas S."/>
            <person name="Lapidus A."/>
            <person name="Glavina del Rio T."/>
            <person name="Dalin E."/>
            <person name="Tice H."/>
            <person name="Bruce D."/>
            <person name="Goodwin L."/>
            <person name="Pitluck S."/>
            <person name="Munk A.C."/>
            <person name="Brettin T."/>
            <person name="Detter J.C."/>
            <person name="Han C."/>
            <person name="Tapia R."/>
            <person name="Schmutz J."/>
            <person name="Larimer F."/>
            <person name="Land M."/>
            <person name="Hauser L."/>
            <person name="Challacombe J.F."/>
            <person name="Green L."/>
            <person name="Lindler L.E."/>
            <person name="Nikolich M.P."/>
            <person name="Richardson P."/>
        </authorList>
    </citation>
    <scope>NUCLEOTIDE SEQUENCE [LARGE SCALE GENOMIC DNA]</scope>
    <source>
        <strain>PB1/+</strain>
    </source>
</reference>
<feature type="chain" id="PRO_0000349987" description="Ribosomal RNA large subunit methyltransferase F">
    <location>
        <begin position="1"/>
        <end position="336"/>
    </location>
</feature>
<protein>
    <recommendedName>
        <fullName evidence="1">Ribosomal RNA large subunit methyltransferase F</fullName>
        <ecNumber evidence="1">2.1.1.181</ecNumber>
    </recommendedName>
    <alternativeName>
        <fullName evidence="1">23S rRNA mA1618 methyltransferase</fullName>
    </alternativeName>
    <alternativeName>
        <fullName evidence="1">rRNA adenine N-6-methyltransferase</fullName>
    </alternativeName>
</protein>
<accession>B2K7Y6</accession>
<gene>
    <name evidence="1" type="primary">rlmF</name>
    <name type="ordered locus">YPTS_2647</name>
</gene>
<proteinExistence type="inferred from homology"/>
<name>RLMF_YERPB</name>
<keyword id="KW-0963">Cytoplasm</keyword>
<keyword id="KW-0489">Methyltransferase</keyword>
<keyword id="KW-0698">rRNA processing</keyword>
<keyword id="KW-0949">S-adenosyl-L-methionine</keyword>
<keyword id="KW-0808">Transferase</keyword>
<comment type="function">
    <text evidence="1">Specifically methylates the adenine in position 1618 of 23S rRNA.</text>
</comment>
<comment type="catalytic activity">
    <reaction evidence="1">
        <text>adenosine(1618) in 23S rRNA + S-adenosyl-L-methionine = N(6)-methyladenosine(1618) in 23S rRNA + S-adenosyl-L-homocysteine + H(+)</text>
        <dbReference type="Rhea" id="RHEA:16497"/>
        <dbReference type="Rhea" id="RHEA-COMP:10229"/>
        <dbReference type="Rhea" id="RHEA-COMP:10231"/>
        <dbReference type="ChEBI" id="CHEBI:15378"/>
        <dbReference type="ChEBI" id="CHEBI:57856"/>
        <dbReference type="ChEBI" id="CHEBI:59789"/>
        <dbReference type="ChEBI" id="CHEBI:74411"/>
        <dbReference type="ChEBI" id="CHEBI:74449"/>
        <dbReference type="EC" id="2.1.1.181"/>
    </reaction>
</comment>
<comment type="subcellular location">
    <subcellularLocation>
        <location evidence="1">Cytoplasm</location>
    </subcellularLocation>
</comment>
<comment type="similarity">
    <text evidence="1">Belongs to the methyltransferase superfamily. METTL16/RlmF family.</text>
</comment>
<comment type="sequence caution" evidence="2">
    <conflict type="erroneous initiation">
        <sequence resource="EMBL-CDS" id="ACC89607"/>
    </conflict>
</comment>
<organism>
    <name type="scientific">Yersinia pseudotuberculosis serotype IB (strain PB1/+)</name>
    <dbReference type="NCBI Taxonomy" id="502801"/>
    <lineage>
        <taxon>Bacteria</taxon>
        <taxon>Pseudomonadati</taxon>
        <taxon>Pseudomonadota</taxon>
        <taxon>Gammaproteobacteria</taxon>
        <taxon>Enterobacterales</taxon>
        <taxon>Yersiniaceae</taxon>
        <taxon>Yersinia</taxon>
    </lineage>
</organism>
<evidence type="ECO:0000255" key="1">
    <source>
        <dbReference type="HAMAP-Rule" id="MF_01848"/>
    </source>
</evidence>
<evidence type="ECO:0000305" key="2"/>